<evidence type="ECO:0000255" key="1">
    <source>
        <dbReference type="HAMAP-Rule" id="MF_00096"/>
    </source>
</evidence>
<proteinExistence type="inferred from homology"/>
<comment type="function">
    <text evidence="1">This protein is involved in the repair of mismatches in DNA. It is possible that it carries out the mismatch recognition step. This protein has a weak ATPase activity.</text>
</comment>
<comment type="similarity">
    <text evidence="1">Belongs to the DNA mismatch repair MutS family.</text>
</comment>
<organism>
    <name type="scientific">Desulforamulus reducens (strain ATCC BAA-1160 / DSM 100696 / MI-1)</name>
    <name type="common">Desulfotomaculum reducens</name>
    <dbReference type="NCBI Taxonomy" id="349161"/>
    <lineage>
        <taxon>Bacteria</taxon>
        <taxon>Bacillati</taxon>
        <taxon>Bacillota</taxon>
        <taxon>Clostridia</taxon>
        <taxon>Eubacteriales</taxon>
        <taxon>Peptococcaceae</taxon>
        <taxon>Desulforamulus</taxon>
    </lineage>
</organism>
<gene>
    <name evidence="1" type="primary">mutS</name>
    <name type="ordered locus">Dred_1887</name>
</gene>
<sequence length="868" mass="97106">MALTPMMQQYLDIKKQHPNTILFFRLGDFYEMFFEDAKLASQELEITLTGRDAGEPERVPMCGVPFHAADSYISKLIEKGYKVAICEQVEDPKVTKGIVKREVIRVITPGTLMDGSMLSEKDNNYLVAISQTSSNNCGMAVADLSTGLFQVTEMEGHWSLESLLDEILRLTPREVLLTPDLKKHEKTVQAFNFLPSTVFTTLEETQQVSDYIELLNNQFGQKVSAVYKDRPAVCMAAGILLQYLINTQKRQLNHITEITAYSPRAYMMLDGIARRNLEISKSLRDGDKRGTLLWVLDATKTAMGGRMLKNWLEQPLIDTLKIQERLDAVEELVNSILLREEISGALKQIYDLERLAARAAYGSANGRDMIALRGSLEKLPFIHDALAAVSSTRLKRIYTEFNTLSDLRKVLDLALAENPPVSLRDGGLIKDGFDQEVDQLRNAARDGKTWLAGLEAREKENTGIKNLKVGFNKVFGYYLEVTRANLSMVPEYYQRRQTLANAERFITPELKEYESMILGAEDRLVELEYNLFVAIRAKVAAEVSSIQKTAALLSEIDALVSLAEVAVRNGFVRPEVTDNGIIEIKDGRHPVVENTQGLGGFVPNDTYLDIKEERLCLITGPNMGGKSTYQRQVALIVLMAQVGSFVPAQRARIGIVDRIFARVGASDDLTSGQSTFMVEMYETKQIIDHATAKSLVIIDELGRGTSNLEGMAIAQSVIEFLHDEVGCRTLFSTHYHELAELEGLLRGLKNYATAVKEQGDEVVFLRKVVRSKASKSYGVHCARLAGLPTSIIRRASELVMQLEFHQRAAQEVVAGKTQIAAASEQLAMFTPQEDQVKEEILALNLTNMTPLESLNFLDNLQKRLREMQ</sequence>
<protein>
    <recommendedName>
        <fullName evidence="1">DNA mismatch repair protein MutS</fullName>
    </recommendedName>
</protein>
<dbReference type="EMBL" id="CP000612">
    <property type="protein sequence ID" value="ABO50409.1"/>
    <property type="molecule type" value="Genomic_DNA"/>
</dbReference>
<dbReference type="SMR" id="A4J5Q6"/>
<dbReference type="STRING" id="349161.Dred_1887"/>
<dbReference type="KEGG" id="drm:Dred_1887"/>
<dbReference type="eggNOG" id="COG0249">
    <property type="taxonomic scope" value="Bacteria"/>
</dbReference>
<dbReference type="HOGENOM" id="CLU_002472_1_3_9"/>
<dbReference type="OrthoDB" id="9802448at2"/>
<dbReference type="Proteomes" id="UP000001556">
    <property type="component" value="Chromosome"/>
</dbReference>
<dbReference type="GO" id="GO:0005829">
    <property type="term" value="C:cytosol"/>
    <property type="evidence" value="ECO:0007669"/>
    <property type="project" value="TreeGrafter"/>
</dbReference>
<dbReference type="GO" id="GO:0005524">
    <property type="term" value="F:ATP binding"/>
    <property type="evidence" value="ECO:0007669"/>
    <property type="project" value="UniProtKB-UniRule"/>
</dbReference>
<dbReference type="GO" id="GO:0140664">
    <property type="term" value="F:ATP-dependent DNA damage sensor activity"/>
    <property type="evidence" value="ECO:0007669"/>
    <property type="project" value="InterPro"/>
</dbReference>
<dbReference type="GO" id="GO:0003684">
    <property type="term" value="F:damaged DNA binding"/>
    <property type="evidence" value="ECO:0007669"/>
    <property type="project" value="UniProtKB-UniRule"/>
</dbReference>
<dbReference type="GO" id="GO:0030983">
    <property type="term" value="F:mismatched DNA binding"/>
    <property type="evidence" value="ECO:0007669"/>
    <property type="project" value="InterPro"/>
</dbReference>
<dbReference type="GO" id="GO:0006298">
    <property type="term" value="P:mismatch repair"/>
    <property type="evidence" value="ECO:0007669"/>
    <property type="project" value="UniProtKB-UniRule"/>
</dbReference>
<dbReference type="CDD" id="cd03284">
    <property type="entry name" value="ABC_MutS1"/>
    <property type="match status" value="1"/>
</dbReference>
<dbReference type="FunFam" id="1.10.1420.10:FF:000007">
    <property type="entry name" value="DNA mismatch repair protein MutS"/>
    <property type="match status" value="1"/>
</dbReference>
<dbReference type="FunFam" id="3.40.1170.10:FF:000001">
    <property type="entry name" value="DNA mismatch repair protein MutS"/>
    <property type="match status" value="1"/>
</dbReference>
<dbReference type="FunFam" id="3.40.50.300:FF:000870">
    <property type="entry name" value="MutS protein homolog 4"/>
    <property type="match status" value="1"/>
</dbReference>
<dbReference type="Gene3D" id="1.10.1420.10">
    <property type="match status" value="2"/>
</dbReference>
<dbReference type="Gene3D" id="3.40.1170.10">
    <property type="entry name" value="DNA repair protein MutS, domain I"/>
    <property type="match status" value="1"/>
</dbReference>
<dbReference type="Gene3D" id="3.30.420.110">
    <property type="entry name" value="MutS, connector domain"/>
    <property type="match status" value="1"/>
</dbReference>
<dbReference type="Gene3D" id="3.40.50.300">
    <property type="entry name" value="P-loop containing nucleotide triphosphate hydrolases"/>
    <property type="match status" value="1"/>
</dbReference>
<dbReference type="HAMAP" id="MF_00096">
    <property type="entry name" value="MutS"/>
    <property type="match status" value="1"/>
</dbReference>
<dbReference type="InterPro" id="IPR005748">
    <property type="entry name" value="DNA_mismatch_repair_MutS"/>
</dbReference>
<dbReference type="InterPro" id="IPR007695">
    <property type="entry name" value="DNA_mismatch_repair_MutS-lik_N"/>
</dbReference>
<dbReference type="InterPro" id="IPR017261">
    <property type="entry name" value="DNA_mismatch_repair_MutS/MSH"/>
</dbReference>
<dbReference type="InterPro" id="IPR000432">
    <property type="entry name" value="DNA_mismatch_repair_MutS_C"/>
</dbReference>
<dbReference type="InterPro" id="IPR007861">
    <property type="entry name" value="DNA_mismatch_repair_MutS_clamp"/>
</dbReference>
<dbReference type="InterPro" id="IPR007696">
    <property type="entry name" value="DNA_mismatch_repair_MutS_core"/>
</dbReference>
<dbReference type="InterPro" id="IPR016151">
    <property type="entry name" value="DNA_mismatch_repair_MutS_N"/>
</dbReference>
<dbReference type="InterPro" id="IPR036187">
    <property type="entry name" value="DNA_mismatch_repair_MutS_sf"/>
</dbReference>
<dbReference type="InterPro" id="IPR007860">
    <property type="entry name" value="DNA_mmatch_repair_MutS_con_dom"/>
</dbReference>
<dbReference type="InterPro" id="IPR045076">
    <property type="entry name" value="MutS"/>
</dbReference>
<dbReference type="InterPro" id="IPR036678">
    <property type="entry name" value="MutS_con_dom_sf"/>
</dbReference>
<dbReference type="InterPro" id="IPR027417">
    <property type="entry name" value="P-loop_NTPase"/>
</dbReference>
<dbReference type="NCBIfam" id="TIGR01070">
    <property type="entry name" value="mutS1"/>
    <property type="match status" value="1"/>
</dbReference>
<dbReference type="NCBIfam" id="NF003810">
    <property type="entry name" value="PRK05399.1"/>
    <property type="match status" value="1"/>
</dbReference>
<dbReference type="PANTHER" id="PTHR11361:SF34">
    <property type="entry name" value="DNA MISMATCH REPAIR PROTEIN MSH1, MITOCHONDRIAL"/>
    <property type="match status" value="1"/>
</dbReference>
<dbReference type="PANTHER" id="PTHR11361">
    <property type="entry name" value="DNA MISMATCH REPAIR PROTEIN MUTS FAMILY MEMBER"/>
    <property type="match status" value="1"/>
</dbReference>
<dbReference type="Pfam" id="PF01624">
    <property type="entry name" value="MutS_I"/>
    <property type="match status" value="1"/>
</dbReference>
<dbReference type="Pfam" id="PF05188">
    <property type="entry name" value="MutS_II"/>
    <property type="match status" value="1"/>
</dbReference>
<dbReference type="Pfam" id="PF05192">
    <property type="entry name" value="MutS_III"/>
    <property type="match status" value="1"/>
</dbReference>
<dbReference type="Pfam" id="PF05190">
    <property type="entry name" value="MutS_IV"/>
    <property type="match status" value="1"/>
</dbReference>
<dbReference type="Pfam" id="PF00488">
    <property type="entry name" value="MutS_V"/>
    <property type="match status" value="1"/>
</dbReference>
<dbReference type="PIRSF" id="PIRSF037677">
    <property type="entry name" value="DNA_mis_repair_Msh6"/>
    <property type="match status" value="1"/>
</dbReference>
<dbReference type="SMART" id="SM00534">
    <property type="entry name" value="MUTSac"/>
    <property type="match status" value="1"/>
</dbReference>
<dbReference type="SMART" id="SM00533">
    <property type="entry name" value="MUTSd"/>
    <property type="match status" value="1"/>
</dbReference>
<dbReference type="SUPFAM" id="SSF55271">
    <property type="entry name" value="DNA repair protein MutS, domain I"/>
    <property type="match status" value="1"/>
</dbReference>
<dbReference type="SUPFAM" id="SSF53150">
    <property type="entry name" value="DNA repair protein MutS, domain II"/>
    <property type="match status" value="1"/>
</dbReference>
<dbReference type="SUPFAM" id="SSF48334">
    <property type="entry name" value="DNA repair protein MutS, domain III"/>
    <property type="match status" value="1"/>
</dbReference>
<dbReference type="SUPFAM" id="SSF52540">
    <property type="entry name" value="P-loop containing nucleoside triphosphate hydrolases"/>
    <property type="match status" value="1"/>
</dbReference>
<dbReference type="PROSITE" id="PS00486">
    <property type="entry name" value="DNA_MISMATCH_REPAIR_2"/>
    <property type="match status" value="1"/>
</dbReference>
<keyword id="KW-0067">ATP-binding</keyword>
<keyword id="KW-0227">DNA damage</keyword>
<keyword id="KW-0234">DNA repair</keyword>
<keyword id="KW-0238">DNA-binding</keyword>
<keyword id="KW-0547">Nucleotide-binding</keyword>
<keyword id="KW-1185">Reference proteome</keyword>
<accession>A4J5Q6</accession>
<feature type="chain" id="PRO_0000335148" description="DNA mismatch repair protein MutS">
    <location>
        <begin position="1"/>
        <end position="868"/>
    </location>
</feature>
<feature type="binding site" evidence="1">
    <location>
        <begin position="620"/>
        <end position="627"/>
    </location>
    <ligand>
        <name>ATP</name>
        <dbReference type="ChEBI" id="CHEBI:30616"/>
    </ligand>
</feature>
<reference key="1">
    <citation type="submission" date="2007-03" db="EMBL/GenBank/DDBJ databases">
        <title>Complete sequence of Desulfotomaculum reducens MI-1.</title>
        <authorList>
            <consortium name="US DOE Joint Genome Institute"/>
            <person name="Copeland A."/>
            <person name="Lucas S."/>
            <person name="Lapidus A."/>
            <person name="Barry K."/>
            <person name="Detter J.C."/>
            <person name="Glavina del Rio T."/>
            <person name="Hammon N."/>
            <person name="Israni S."/>
            <person name="Dalin E."/>
            <person name="Tice H."/>
            <person name="Pitluck S."/>
            <person name="Sims D."/>
            <person name="Brettin T."/>
            <person name="Bruce D."/>
            <person name="Han C."/>
            <person name="Tapia R."/>
            <person name="Schmutz J."/>
            <person name="Larimer F."/>
            <person name="Land M."/>
            <person name="Hauser L."/>
            <person name="Kyrpides N."/>
            <person name="Kim E."/>
            <person name="Tebo B.M."/>
            <person name="Richardson P."/>
        </authorList>
    </citation>
    <scope>NUCLEOTIDE SEQUENCE [LARGE SCALE GENOMIC DNA]</scope>
    <source>
        <strain>ATCC BAA-1160 / DSM 100696 / MI-1</strain>
    </source>
</reference>
<name>MUTS_DESRM</name>